<feature type="signal peptide" evidence="3">
    <location>
        <begin position="1"/>
        <end position="21"/>
    </location>
</feature>
<feature type="chain" id="PRO_0000268989" description="Classical arabinogalactan protein 3">
    <location>
        <begin position="22"/>
        <end position="116"/>
    </location>
</feature>
<feature type="propeptide" id="PRO_0000268990" description="Removed in mature form" evidence="3">
    <location>
        <begin position="117"/>
        <end position="139"/>
    </location>
</feature>
<feature type="region of interest" description="Disordered" evidence="4">
    <location>
        <begin position="30"/>
        <end position="115"/>
    </location>
</feature>
<feature type="compositionally biased region" description="Pro residues" evidence="4">
    <location>
        <begin position="46"/>
        <end position="77"/>
    </location>
</feature>
<feature type="compositionally biased region" description="Pro residues" evidence="4">
    <location>
        <begin position="97"/>
        <end position="107"/>
    </location>
</feature>
<feature type="modified residue" description="Pyrrolidone carboxylic acid" evidence="2">
    <location>
        <position position="22"/>
    </location>
</feature>
<feature type="lipid moiety-binding region" description="GPI-anchor amidated aspartate" evidence="3">
    <location>
        <position position="116"/>
    </location>
</feature>
<accession>Q9ZT17</accession>
<proteinExistence type="evidence at transcript level"/>
<name>AGP3_ARATH</name>
<gene>
    <name type="primary">AGP3</name>
    <name type="ordered locus">At4g40090</name>
    <name type="ORF">T5J17.1</name>
</gene>
<keyword id="KW-1003">Cell membrane</keyword>
<keyword id="KW-0325">Glycoprotein</keyword>
<keyword id="KW-0336">GPI-anchor</keyword>
<keyword id="KW-0449">Lipoprotein</keyword>
<keyword id="KW-0472">Membrane</keyword>
<keyword id="KW-0654">Proteoglycan</keyword>
<keyword id="KW-0873">Pyrrolidone carboxylic acid</keyword>
<keyword id="KW-1185">Reference proteome</keyword>
<keyword id="KW-0732">Signal</keyword>
<dbReference type="EMBL" id="AF082300">
    <property type="protein sequence ID" value="AAC77825.1"/>
    <property type="molecule type" value="mRNA"/>
</dbReference>
<dbReference type="EMBL" id="AL161596">
    <property type="status" value="NOT_ANNOTATED_CDS"/>
    <property type="molecule type" value="Genomic_DNA"/>
</dbReference>
<dbReference type="EMBL" id="CP002687">
    <property type="protein sequence ID" value="AEE87166.1"/>
    <property type="molecule type" value="Genomic_DNA"/>
</dbReference>
<dbReference type="RefSeq" id="NP_568081.5">
    <property type="nucleotide sequence ID" value="NM_120175.5"/>
</dbReference>
<dbReference type="STRING" id="3702.Q9ZT17"/>
<dbReference type="GlyGen" id="Q9ZT17">
    <property type="glycosylation" value="1 site"/>
</dbReference>
<dbReference type="PaxDb" id="3702-AT4G40090.1"/>
<dbReference type="EnsemblPlants" id="AT4G40090.1">
    <property type="protein sequence ID" value="AT4G40090.1"/>
    <property type="gene ID" value="AT4G40090"/>
</dbReference>
<dbReference type="GeneID" id="830172"/>
<dbReference type="Gramene" id="AT4G40090.1">
    <property type="protein sequence ID" value="AT4G40090.1"/>
    <property type="gene ID" value="AT4G40090"/>
</dbReference>
<dbReference type="KEGG" id="ath:AT4G40090"/>
<dbReference type="Araport" id="AT4G40090"/>
<dbReference type="TAIR" id="AT4G40090">
    <property type="gene designation" value="AGP3"/>
</dbReference>
<dbReference type="HOGENOM" id="CLU_149596_0_0_1"/>
<dbReference type="InParanoid" id="Q9ZT17"/>
<dbReference type="OMA" id="MAGFNRL"/>
<dbReference type="PRO" id="PR:Q9ZT17"/>
<dbReference type="Proteomes" id="UP000006548">
    <property type="component" value="Chromosome 4"/>
</dbReference>
<dbReference type="ExpressionAtlas" id="Q9ZT17">
    <property type="expression patterns" value="baseline and differential"/>
</dbReference>
<dbReference type="GO" id="GO:0005886">
    <property type="term" value="C:plasma membrane"/>
    <property type="evidence" value="ECO:0007669"/>
    <property type="project" value="UniProtKB-SubCell"/>
</dbReference>
<dbReference type="GO" id="GO:0098552">
    <property type="term" value="C:side of membrane"/>
    <property type="evidence" value="ECO:0007669"/>
    <property type="project" value="UniProtKB-KW"/>
</dbReference>
<dbReference type="InterPro" id="IPR044959">
    <property type="entry name" value="AGP"/>
</dbReference>
<dbReference type="PANTHER" id="PTHR36321:SF8">
    <property type="entry name" value="CLASSICAL ARABINOGALACTAN PROTEIN 3"/>
    <property type="match status" value="1"/>
</dbReference>
<dbReference type="PANTHER" id="PTHR36321">
    <property type="entry name" value="CLASSICAL ARABINOGALACTAN PROTEIN 9"/>
    <property type="match status" value="1"/>
</dbReference>
<dbReference type="PRINTS" id="PR01217">
    <property type="entry name" value="PRICHEXTENSN"/>
</dbReference>
<sequence>MALKTLQALIFLGLFAASCLAQAPAPAPITFLPPVESPSPVVTPTAEPPAPVASPPIPANEPTPVPTTPPTVSPPTTSPTTSPVASPPKPYALAPGPSGPTPAPAPAPRADGPVADSALTNKAFLVSTVIAGALYAVLA</sequence>
<comment type="function">
    <text>Proteoglycan that seems to be implicated in diverse developmental roles such as differentiation, cell-cell recognition, embryogenesis and programmed cell death.</text>
</comment>
<comment type="subcellular location">
    <subcellularLocation>
        <location evidence="6">Cell membrane</location>
        <topology evidence="6">Lipid-anchor</topology>
        <topology evidence="6">GPI-anchor</topology>
    </subcellularLocation>
</comment>
<comment type="tissue specificity">
    <text evidence="5">Expressed at a low level in roots.</text>
</comment>
<comment type="PTM">
    <text evidence="1">O-glycosylated on the hydroxyproline residues.</text>
</comment>
<comment type="similarity">
    <text evidence="6">Belongs to the classical AGP family.</text>
</comment>
<comment type="sequence caution" evidence="6">
    <conflict type="frameshift">
        <sequence resource="EMBL" id="AL161596"/>
    </conflict>
</comment>
<organism>
    <name type="scientific">Arabidopsis thaliana</name>
    <name type="common">Mouse-ear cress</name>
    <dbReference type="NCBI Taxonomy" id="3702"/>
    <lineage>
        <taxon>Eukaryota</taxon>
        <taxon>Viridiplantae</taxon>
        <taxon>Streptophyta</taxon>
        <taxon>Embryophyta</taxon>
        <taxon>Tracheophyta</taxon>
        <taxon>Spermatophyta</taxon>
        <taxon>Magnoliopsida</taxon>
        <taxon>eudicotyledons</taxon>
        <taxon>Gunneridae</taxon>
        <taxon>Pentapetalae</taxon>
        <taxon>rosids</taxon>
        <taxon>malvids</taxon>
        <taxon>Brassicales</taxon>
        <taxon>Brassicaceae</taxon>
        <taxon>Camelineae</taxon>
        <taxon>Arabidopsis</taxon>
    </lineage>
</organism>
<reference key="1">
    <citation type="journal article" date="1998" name="Trends Plant Sci.">
        <title>GPI-anchors on arabinogalactan-proteins: implications for signalling in plants.</title>
        <authorList>
            <person name="Schultz C.J."/>
            <person name="Gilson P.R."/>
            <person name="Oxley D."/>
            <person name="Youl J.J."/>
            <person name="Bacic A."/>
        </authorList>
    </citation>
    <scope>NUCLEOTIDE SEQUENCE [MRNA]</scope>
    <source>
        <strain>cv. Columbia</strain>
    </source>
</reference>
<reference key="2">
    <citation type="journal article" date="1999" name="Nature">
        <title>Sequence and analysis of chromosome 4 of the plant Arabidopsis thaliana.</title>
        <authorList>
            <person name="Mayer K.F.X."/>
            <person name="Schueller C."/>
            <person name="Wambutt R."/>
            <person name="Murphy G."/>
            <person name="Volckaert G."/>
            <person name="Pohl T."/>
            <person name="Duesterhoeft A."/>
            <person name="Stiekema W."/>
            <person name="Entian K.-D."/>
            <person name="Terryn N."/>
            <person name="Harris B."/>
            <person name="Ansorge W."/>
            <person name="Brandt P."/>
            <person name="Grivell L.A."/>
            <person name="Rieger M."/>
            <person name="Weichselgartner M."/>
            <person name="de Simone V."/>
            <person name="Obermaier B."/>
            <person name="Mache R."/>
            <person name="Mueller M."/>
            <person name="Kreis M."/>
            <person name="Delseny M."/>
            <person name="Puigdomenech P."/>
            <person name="Watson M."/>
            <person name="Schmidtheini T."/>
            <person name="Reichert B."/>
            <person name="Portetelle D."/>
            <person name="Perez-Alonso M."/>
            <person name="Boutry M."/>
            <person name="Bancroft I."/>
            <person name="Vos P."/>
            <person name="Hoheisel J."/>
            <person name="Zimmermann W."/>
            <person name="Wedler H."/>
            <person name="Ridley P."/>
            <person name="Langham S.-A."/>
            <person name="McCullagh B."/>
            <person name="Bilham L."/>
            <person name="Robben J."/>
            <person name="van der Schueren J."/>
            <person name="Grymonprez B."/>
            <person name="Chuang Y.-J."/>
            <person name="Vandenbussche F."/>
            <person name="Braeken M."/>
            <person name="Weltjens I."/>
            <person name="Voet M."/>
            <person name="Bastiaens I."/>
            <person name="Aert R."/>
            <person name="Defoor E."/>
            <person name="Weitzenegger T."/>
            <person name="Bothe G."/>
            <person name="Ramsperger U."/>
            <person name="Hilbert H."/>
            <person name="Braun M."/>
            <person name="Holzer E."/>
            <person name="Brandt A."/>
            <person name="Peters S."/>
            <person name="van Staveren M."/>
            <person name="Dirkse W."/>
            <person name="Mooijman P."/>
            <person name="Klein Lankhorst R."/>
            <person name="Rose M."/>
            <person name="Hauf J."/>
            <person name="Koetter P."/>
            <person name="Berneiser S."/>
            <person name="Hempel S."/>
            <person name="Feldpausch M."/>
            <person name="Lamberth S."/>
            <person name="Van den Daele H."/>
            <person name="De Keyser A."/>
            <person name="Buysshaert C."/>
            <person name="Gielen J."/>
            <person name="Villarroel R."/>
            <person name="De Clercq R."/>
            <person name="van Montagu M."/>
            <person name="Rogers J."/>
            <person name="Cronin A."/>
            <person name="Quail M.A."/>
            <person name="Bray-Allen S."/>
            <person name="Clark L."/>
            <person name="Doggett J."/>
            <person name="Hall S."/>
            <person name="Kay M."/>
            <person name="Lennard N."/>
            <person name="McLay K."/>
            <person name="Mayes R."/>
            <person name="Pettett A."/>
            <person name="Rajandream M.A."/>
            <person name="Lyne M."/>
            <person name="Benes V."/>
            <person name="Rechmann S."/>
            <person name="Borkova D."/>
            <person name="Bloecker H."/>
            <person name="Scharfe M."/>
            <person name="Grimm M."/>
            <person name="Loehnert T.-H."/>
            <person name="Dose S."/>
            <person name="de Haan M."/>
            <person name="Maarse A.C."/>
            <person name="Schaefer M."/>
            <person name="Mueller-Auer S."/>
            <person name="Gabel C."/>
            <person name="Fuchs M."/>
            <person name="Fartmann B."/>
            <person name="Granderath K."/>
            <person name="Dauner D."/>
            <person name="Herzl A."/>
            <person name="Neumann S."/>
            <person name="Argiriou A."/>
            <person name="Vitale D."/>
            <person name="Liguori R."/>
            <person name="Piravandi E."/>
            <person name="Massenet O."/>
            <person name="Quigley F."/>
            <person name="Clabauld G."/>
            <person name="Muendlein A."/>
            <person name="Felber R."/>
            <person name="Schnabl S."/>
            <person name="Hiller R."/>
            <person name="Schmidt W."/>
            <person name="Lecharny A."/>
            <person name="Aubourg S."/>
            <person name="Chefdor F."/>
            <person name="Cooke R."/>
            <person name="Berger C."/>
            <person name="Monfort A."/>
            <person name="Casacuberta E."/>
            <person name="Gibbons T."/>
            <person name="Weber N."/>
            <person name="Vandenbol M."/>
            <person name="Bargues M."/>
            <person name="Terol J."/>
            <person name="Torres A."/>
            <person name="Perez-Perez A."/>
            <person name="Purnelle B."/>
            <person name="Bent E."/>
            <person name="Johnson S."/>
            <person name="Tacon D."/>
            <person name="Jesse T."/>
            <person name="Heijnen L."/>
            <person name="Schwarz S."/>
            <person name="Scholler P."/>
            <person name="Heber S."/>
            <person name="Francs P."/>
            <person name="Bielke C."/>
            <person name="Frishman D."/>
            <person name="Haase D."/>
            <person name="Lemcke K."/>
            <person name="Mewes H.-W."/>
            <person name="Stocker S."/>
            <person name="Zaccaria P."/>
            <person name="Bevan M."/>
            <person name="Wilson R.K."/>
            <person name="de la Bastide M."/>
            <person name="Habermann K."/>
            <person name="Parnell L."/>
            <person name="Dedhia N."/>
            <person name="Gnoj L."/>
            <person name="Schutz K."/>
            <person name="Huang E."/>
            <person name="Spiegel L."/>
            <person name="Sekhon M."/>
            <person name="Murray J."/>
            <person name="Sheet P."/>
            <person name="Cordes M."/>
            <person name="Abu-Threideh J."/>
            <person name="Stoneking T."/>
            <person name="Kalicki J."/>
            <person name="Graves T."/>
            <person name="Harmon G."/>
            <person name="Edwards J."/>
            <person name="Latreille P."/>
            <person name="Courtney L."/>
            <person name="Cloud J."/>
            <person name="Abbott A."/>
            <person name="Scott K."/>
            <person name="Johnson D."/>
            <person name="Minx P."/>
            <person name="Bentley D."/>
            <person name="Fulton B."/>
            <person name="Miller N."/>
            <person name="Greco T."/>
            <person name="Kemp K."/>
            <person name="Kramer J."/>
            <person name="Fulton L."/>
            <person name="Mardis E."/>
            <person name="Dante M."/>
            <person name="Pepin K."/>
            <person name="Hillier L.W."/>
            <person name="Nelson J."/>
            <person name="Spieth J."/>
            <person name="Ryan E."/>
            <person name="Andrews S."/>
            <person name="Geisel C."/>
            <person name="Layman D."/>
            <person name="Du H."/>
            <person name="Ali J."/>
            <person name="Berghoff A."/>
            <person name="Jones K."/>
            <person name="Drone K."/>
            <person name="Cotton M."/>
            <person name="Joshu C."/>
            <person name="Antonoiu B."/>
            <person name="Zidanic M."/>
            <person name="Strong C."/>
            <person name="Sun H."/>
            <person name="Lamar B."/>
            <person name="Yordan C."/>
            <person name="Ma P."/>
            <person name="Zhong J."/>
            <person name="Preston R."/>
            <person name="Vil D."/>
            <person name="Shekher M."/>
            <person name="Matero A."/>
            <person name="Shah R."/>
            <person name="Swaby I.K."/>
            <person name="O'Shaughnessy A."/>
            <person name="Rodriguez M."/>
            <person name="Hoffman J."/>
            <person name="Till S."/>
            <person name="Granat S."/>
            <person name="Shohdy N."/>
            <person name="Hasegawa A."/>
            <person name="Hameed A."/>
            <person name="Lodhi M."/>
            <person name="Johnson A."/>
            <person name="Chen E."/>
            <person name="Marra M.A."/>
            <person name="Martienssen R."/>
            <person name="McCombie W.R."/>
        </authorList>
    </citation>
    <scope>NUCLEOTIDE SEQUENCE [LARGE SCALE GENOMIC DNA]</scope>
    <source>
        <strain>cv. Columbia</strain>
    </source>
</reference>
<reference key="3">
    <citation type="journal article" date="2017" name="Plant J.">
        <title>Araport11: a complete reannotation of the Arabidopsis thaliana reference genome.</title>
        <authorList>
            <person name="Cheng C.Y."/>
            <person name="Krishnakumar V."/>
            <person name="Chan A.P."/>
            <person name="Thibaud-Nissen F."/>
            <person name="Schobel S."/>
            <person name="Town C.D."/>
        </authorList>
    </citation>
    <scope>GENOME REANNOTATION</scope>
    <source>
        <strain>cv. Columbia</strain>
    </source>
</reference>
<reference key="4">
    <citation type="journal article" date="2000" name="Plant Cell">
        <title>The classical arabinogalactan protein gene family of Arabidopsis.</title>
        <authorList>
            <person name="Schultz C.J."/>
            <person name="Johnson K.L."/>
            <person name="Currie G."/>
            <person name="Bacic A."/>
        </authorList>
    </citation>
    <scope>TISSUE SPECIFICITY</scope>
</reference>
<reference key="5">
    <citation type="journal article" date="2002" name="Plant Physiol.">
        <title>Using genomic resources to guide research directions. The arabinogalactan protein gene family as a test case.</title>
        <authorList>
            <person name="Schultz C.J."/>
            <person name="Rumsewicz M.P."/>
            <person name="Johnson K.L."/>
            <person name="Jones B.J."/>
            <person name="Gaspar Y.M."/>
            <person name="Bacic A."/>
        </authorList>
    </citation>
    <scope>GENE FAMILY</scope>
    <scope>NOMENCLATURE</scope>
</reference>
<evidence type="ECO:0000250" key="1"/>
<evidence type="ECO:0000250" key="2">
    <source>
        <dbReference type="UniProtKB" id="Q9SJY7"/>
    </source>
</evidence>
<evidence type="ECO:0000255" key="3"/>
<evidence type="ECO:0000256" key="4">
    <source>
        <dbReference type="SAM" id="MobiDB-lite"/>
    </source>
</evidence>
<evidence type="ECO:0000269" key="5">
    <source>
    </source>
</evidence>
<evidence type="ECO:0000305" key="6"/>
<protein>
    <recommendedName>
        <fullName>Classical arabinogalactan protein 3</fullName>
    </recommendedName>
</protein>